<dbReference type="EMBL" id="D10444">
    <property type="protein sequence ID" value="BAA01234.1"/>
    <property type="molecule type" value="mRNA"/>
</dbReference>
<dbReference type="PIR" id="JC1168">
    <property type="entry name" value="JC1168"/>
</dbReference>
<dbReference type="RefSeq" id="XP_035619733.1">
    <property type="nucleotide sequence ID" value="XM_035763840.2"/>
</dbReference>
<dbReference type="RefSeq" id="XP_052378518.1">
    <property type="nucleotide sequence ID" value="XM_052522558.1"/>
</dbReference>
<dbReference type="SMR" id="Q91169"/>
<dbReference type="GeneID" id="118376997"/>
<dbReference type="OrthoDB" id="6358449at2759"/>
<dbReference type="GO" id="GO:0005634">
    <property type="term" value="C:nucleus"/>
    <property type="evidence" value="ECO:0000250"/>
    <property type="project" value="UniProtKB"/>
</dbReference>
<dbReference type="GO" id="GO:0000981">
    <property type="term" value="F:DNA-binding transcription factor activity, RNA polymerase II-specific"/>
    <property type="evidence" value="ECO:0000250"/>
    <property type="project" value="UniProtKB"/>
</dbReference>
<dbReference type="GO" id="GO:0000978">
    <property type="term" value="F:RNA polymerase II cis-regulatory region sequence-specific DNA binding"/>
    <property type="evidence" value="ECO:0007669"/>
    <property type="project" value="TreeGrafter"/>
</dbReference>
<dbReference type="GO" id="GO:0045944">
    <property type="term" value="P:positive regulation of transcription by RNA polymerase II"/>
    <property type="evidence" value="ECO:0000250"/>
    <property type="project" value="UniProtKB"/>
</dbReference>
<dbReference type="CDD" id="cd00086">
    <property type="entry name" value="homeodomain"/>
    <property type="match status" value="1"/>
</dbReference>
<dbReference type="FunFam" id="1.10.10.60:FF:000150">
    <property type="entry name" value="POU domain protein"/>
    <property type="match status" value="1"/>
</dbReference>
<dbReference type="FunFam" id="1.10.260.40:FF:000007">
    <property type="entry name" value="POU domain protein"/>
    <property type="match status" value="1"/>
</dbReference>
<dbReference type="Gene3D" id="1.10.10.60">
    <property type="entry name" value="Homeodomain-like"/>
    <property type="match status" value="1"/>
</dbReference>
<dbReference type="Gene3D" id="1.10.260.40">
    <property type="entry name" value="lambda repressor-like DNA-binding domains"/>
    <property type="match status" value="1"/>
</dbReference>
<dbReference type="InterPro" id="IPR001356">
    <property type="entry name" value="HD"/>
</dbReference>
<dbReference type="InterPro" id="IPR017970">
    <property type="entry name" value="Homeobox_CS"/>
</dbReference>
<dbReference type="InterPro" id="IPR009057">
    <property type="entry name" value="Homeodomain-like_sf"/>
</dbReference>
<dbReference type="InterPro" id="IPR010982">
    <property type="entry name" value="Lambda_DNA-bd_dom_sf"/>
</dbReference>
<dbReference type="InterPro" id="IPR013847">
    <property type="entry name" value="POU"/>
</dbReference>
<dbReference type="InterPro" id="IPR000327">
    <property type="entry name" value="POU_dom"/>
</dbReference>
<dbReference type="InterPro" id="IPR050255">
    <property type="entry name" value="POU_domain_TF"/>
</dbReference>
<dbReference type="PANTHER" id="PTHR11636:SF84">
    <property type="entry name" value="NETRIN-1-RELATED"/>
    <property type="match status" value="1"/>
</dbReference>
<dbReference type="PANTHER" id="PTHR11636">
    <property type="entry name" value="POU DOMAIN"/>
    <property type="match status" value="1"/>
</dbReference>
<dbReference type="Pfam" id="PF00046">
    <property type="entry name" value="Homeodomain"/>
    <property type="match status" value="1"/>
</dbReference>
<dbReference type="Pfam" id="PF00157">
    <property type="entry name" value="Pou"/>
    <property type="match status" value="1"/>
</dbReference>
<dbReference type="PRINTS" id="PR00028">
    <property type="entry name" value="POUDOMAIN"/>
</dbReference>
<dbReference type="SMART" id="SM00389">
    <property type="entry name" value="HOX"/>
    <property type="match status" value="1"/>
</dbReference>
<dbReference type="SMART" id="SM00352">
    <property type="entry name" value="POU"/>
    <property type="match status" value="1"/>
</dbReference>
<dbReference type="SUPFAM" id="SSF46689">
    <property type="entry name" value="Homeodomain-like"/>
    <property type="match status" value="1"/>
</dbReference>
<dbReference type="SUPFAM" id="SSF47413">
    <property type="entry name" value="lambda repressor-like DNA-binding domains"/>
    <property type="match status" value="1"/>
</dbReference>
<dbReference type="PROSITE" id="PS00027">
    <property type="entry name" value="HOMEOBOX_1"/>
    <property type="match status" value="1"/>
</dbReference>
<dbReference type="PROSITE" id="PS50071">
    <property type="entry name" value="HOMEOBOX_2"/>
    <property type="match status" value="1"/>
</dbReference>
<dbReference type="PROSITE" id="PS00035">
    <property type="entry name" value="POU_1"/>
    <property type="match status" value="1"/>
</dbReference>
<dbReference type="PROSITE" id="PS00465">
    <property type="entry name" value="POU_2"/>
    <property type="match status" value="1"/>
</dbReference>
<dbReference type="PROSITE" id="PS51179">
    <property type="entry name" value="POU_3"/>
    <property type="match status" value="1"/>
</dbReference>
<keyword id="KW-0010">Activator</keyword>
<keyword id="KW-0238">DNA-binding</keyword>
<keyword id="KW-0371">Homeobox</keyword>
<keyword id="KW-0539">Nucleus</keyword>
<keyword id="KW-0804">Transcription</keyword>
<keyword id="KW-0805">Transcription regulation</keyword>
<feature type="chain" id="PRO_0000100705" description="Pituitary-specific positive transcription factor 1">
    <location>
        <begin position="1"/>
        <end position="365"/>
    </location>
</feature>
<feature type="domain" description="POU-specific" evidence="3">
    <location>
        <begin position="188"/>
        <end position="262"/>
    </location>
</feature>
<feature type="DNA-binding region" description="Homeobox" evidence="2">
    <location>
        <begin position="278"/>
        <end position="337"/>
    </location>
</feature>
<feature type="region of interest" description="Disordered" evidence="4">
    <location>
        <begin position="160"/>
        <end position="191"/>
    </location>
</feature>
<feature type="short sequence motif" description="9aaTAD" evidence="1">
    <location>
        <begin position="5"/>
        <end position="12"/>
    </location>
</feature>
<feature type="compositionally biased region" description="Basic and acidic residues" evidence="4">
    <location>
        <begin position="173"/>
        <end position="183"/>
    </location>
</feature>
<reference key="1">
    <citation type="journal article" date="1992" name="Gene">
        <title>Structures of cDNAs encoding chum salmon pituitary-specific transcription factor, Pit-1/GHF-1.</title>
        <authorList>
            <person name="Ono M."/>
            <person name="Takayama Y."/>
        </authorList>
    </citation>
    <scope>NUCLEOTIDE SEQUENCE [MRNA]</scope>
</reference>
<name>PIT1_ONCKE</name>
<comment type="function">
    <text evidence="1">Transcription factor that activates growth hormone and prolactin genes. Specifically binds to the consensus sequence 5'-TAAAT-3'.</text>
</comment>
<comment type="subcellular location">
    <subcellularLocation>
        <location evidence="1">Nucleus</location>
    </subcellularLocation>
</comment>
<comment type="domain">
    <text evidence="1">The 9aaTAD motif is a transactivation domain present in a large number of yeast and animal transcription factors.</text>
</comment>
<comment type="similarity">
    <text evidence="5">Belongs to the POU transcription factor family. Class-1 subfamily.</text>
</comment>
<organism>
    <name type="scientific">Oncorhynchus keta</name>
    <name type="common">Chum salmon</name>
    <name type="synonym">Salmo keta</name>
    <dbReference type="NCBI Taxonomy" id="8018"/>
    <lineage>
        <taxon>Eukaryota</taxon>
        <taxon>Metazoa</taxon>
        <taxon>Chordata</taxon>
        <taxon>Craniata</taxon>
        <taxon>Vertebrata</taxon>
        <taxon>Euteleostomi</taxon>
        <taxon>Actinopterygii</taxon>
        <taxon>Neopterygii</taxon>
        <taxon>Teleostei</taxon>
        <taxon>Protacanthopterygii</taxon>
        <taxon>Salmoniformes</taxon>
        <taxon>Salmonidae</taxon>
        <taxon>Salmoninae</taxon>
        <taxon>Oncorhynchus</taxon>
    </lineage>
</organism>
<gene>
    <name type="primary">pou1f1</name>
    <name type="synonym">pit1</name>
</gene>
<accession>Q91169</accession>
<sequence length="365" mass="40333">MSCQAFSADSFTTLAGDSLPLLMHHASAADCLPSSASTHTHNMVSAVPSGLSLLQSSKRSHMHLSTSTLGNGPPGLHYPVTPCHYSNQQTTYGMMAAQEMLSASISQTRILQTCSVPHPNMVNGANTLQGSLAPCLYKFPEHGLGGGSCSLSHSFPPLPPAVLSEEPPLGGTKDLRLRSRPPDDPPDMDSPQIRELEKFANNFKLRRIKLGYTQTNVGEALAAVHGSEFSQTTICRFENLQLSFKNACTLKAILAKWLDEAEQAGALFNEKMGMNERKRKRRTTISLGAKEALERSFREKIKPSSQEIVRMAEGLHLEKEVVRVWFCNRRQREKRVKTSLHHSSYLTKDSPTYRYPYLSPNAIKP</sequence>
<proteinExistence type="evidence at transcript level"/>
<evidence type="ECO:0000250" key="1">
    <source>
        <dbReference type="UniProtKB" id="P28069"/>
    </source>
</evidence>
<evidence type="ECO:0000255" key="2">
    <source>
        <dbReference type="PROSITE-ProRule" id="PRU00108"/>
    </source>
</evidence>
<evidence type="ECO:0000255" key="3">
    <source>
        <dbReference type="PROSITE-ProRule" id="PRU00530"/>
    </source>
</evidence>
<evidence type="ECO:0000256" key="4">
    <source>
        <dbReference type="SAM" id="MobiDB-lite"/>
    </source>
</evidence>
<evidence type="ECO:0000305" key="5"/>
<protein>
    <recommendedName>
        <fullName>Pituitary-specific positive transcription factor 1</fullName>
        <shortName>PIT-1</shortName>
    </recommendedName>
    <alternativeName>
        <fullName>Growth hormone factor 1</fullName>
        <shortName>GHF-1</shortName>
    </alternativeName>
</protein>